<proteinExistence type="evidence at protein level"/>
<name>RB27A_HUMAN</name>
<evidence type="ECO:0000250" key="1"/>
<evidence type="ECO:0000250" key="2">
    <source>
        <dbReference type="UniProtKB" id="Q9ERI2"/>
    </source>
</evidence>
<evidence type="ECO:0000269" key="3">
    <source>
    </source>
</evidence>
<evidence type="ECO:0000269" key="4">
    <source>
    </source>
</evidence>
<evidence type="ECO:0000269" key="5">
    <source>
    </source>
</evidence>
<evidence type="ECO:0000269" key="6">
    <source>
    </source>
</evidence>
<evidence type="ECO:0000269" key="7">
    <source>
    </source>
</evidence>
<evidence type="ECO:0000269" key="8">
    <source>
    </source>
</evidence>
<evidence type="ECO:0000269" key="9">
    <source>
    </source>
</evidence>
<evidence type="ECO:0000269" key="10">
    <source>
    </source>
</evidence>
<evidence type="ECO:0000269" key="11">
    <source>
    </source>
</evidence>
<evidence type="ECO:0000269" key="12">
    <source>
    </source>
</evidence>
<evidence type="ECO:0000269" key="13">
    <source>
    </source>
</evidence>
<evidence type="ECO:0000303" key="14">
    <source>
    </source>
</evidence>
<evidence type="ECO:0000305" key="15"/>
<evidence type="ECO:0000305" key="16">
    <source>
    </source>
</evidence>
<evidence type="ECO:0000305" key="17">
    <source>
    </source>
</evidence>
<evidence type="ECO:0000305" key="18">
    <source>
    </source>
</evidence>
<evidence type="ECO:0007744" key="19">
    <source>
    </source>
</evidence>
<evidence type="ECO:0007744" key="20">
    <source>
    </source>
</evidence>
<evidence type="ECO:0007744" key="21">
    <source>
    </source>
</evidence>
<evidence type="ECO:0007829" key="22">
    <source>
        <dbReference type="PDB" id="8P3G"/>
    </source>
</evidence>
<evidence type="ECO:0007829" key="23">
    <source>
        <dbReference type="PDB" id="8P3I"/>
    </source>
</evidence>
<reference key="1">
    <citation type="journal article" date="1995" name="J. Biol. Chem.">
        <title>Deficient geranylgeranylation of Ram/Rab27 in choroideremia.</title>
        <authorList>
            <person name="Seabra M.C."/>
            <person name="Ho Y.K."/>
            <person name="Anant J.S."/>
        </authorList>
    </citation>
    <scope>NUCLEOTIDE SEQUENCE [MRNA] (ISOFORM LONG)</scope>
    <scope>PARTIAL PROTEIN SEQUENCE</scope>
    <source>
        <tissue>Retina</tissue>
    </source>
</reference>
<reference key="2">
    <citation type="submission" date="1999-05" db="EMBL/GenBank/DDBJ databases">
        <authorList>
            <person name="Seabra M.C."/>
        </authorList>
    </citation>
    <scope>SEQUENCE REVISION TO 99</scope>
</reference>
<reference key="3">
    <citation type="journal article" date="1997" name="Biochem. Mol. Med.">
        <title>Molecular cloning and characterization of rab27a and rab27b, novel human rab proteins shared by melanocytes and platelets.</title>
        <authorList>
            <person name="Chen D."/>
            <person name="Guo J."/>
            <person name="Miki T."/>
            <person name="Tachibana M."/>
            <person name="Gahl W.A."/>
        </authorList>
    </citation>
    <scope>NUCLEOTIDE SEQUENCE [MRNA] (ISOFORM LONG)</scope>
    <source>
        <tissue>Melanocyte</tissue>
    </source>
</reference>
<reference key="4">
    <citation type="journal article" date="1999" name="Gene">
        <title>Cloning, mapping and characterization of the human RAB27A gene.</title>
        <authorList>
            <person name="Tolmachova T."/>
            <person name="Ramalho J.S."/>
            <person name="Anant J.S."/>
            <person name="Schultz R.A."/>
            <person name="Huxley C.M."/>
            <person name="Seabra M.C."/>
        </authorList>
    </citation>
    <scope>NUCLEOTIDE SEQUENCE [GENOMIC DNA] (ISOFORM LONG)</scope>
</reference>
<reference key="5">
    <citation type="journal article" date="2000" name="Proc. Natl. Acad. Sci. U.S.A.">
        <title>Gene expression profiling in the human hypothalamus-pituitary-adrenal axis and full-length cDNA cloning.</title>
        <authorList>
            <person name="Hu R.-M."/>
            <person name="Han Z.-G."/>
            <person name="Song H.-D."/>
            <person name="Peng Y.-D."/>
            <person name="Huang Q.-H."/>
            <person name="Ren S.-X."/>
            <person name="Gu Y.-J."/>
            <person name="Huang C.-H."/>
            <person name="Li Y.-B."/>
            <person name="Jiang C.-L."/>
            <person name="Fu G."/>
            <person name="Zhang Q.-H."/>
            <person name="Gu B.-W."/>
            <person name="Dai M."/>
            <person name="Mao Y.-F."/>
            <person name="Gao G.-F."/>
            <person name="Rong R."/>
            <person name="Ye M."/>
            <person name="Zhou J."/>
            <person name="Xu S.-H."/>
            <person name="Gu J."/>
            <person name="Shi J.-X."/>
            <person name="Jin W.-R."/>
            <person name="Zhang C.-K."/>
            <person name="Wu T.-M."/>
            <person name="Huang G.-Y."/>
            <person name="Chen Z."/>
            <person name="Chen M.-D."/>
            <person name="Chen J.-L."/>
        </authorList>
    </citation>
    <scope>NUCLEOTIDE SEQUENCE [LARGE SCALE MRNA] (ISOFORM SHORT)</scope>
    <source>
        <tissue>Pituitary</tissue>
    </source>
</reference>
<reference key="6">
    <citation type="submission" date="2001-11" db="EMBL/GenBank/DDBJ databases">
        <title>Genomic organization of the human RAB27A gene.</title>
        <authorList>
            <person name="Anderson P.D."/>
            <person name="Huizing M."/>
            <person name="Anikster Y."/>
            <person name="Gahl W.A."/>
        </authorList>
    </citation>
    <scope>NUCLEOTIDE SEQUENCE [GENOMIC DNA]</scope>
    <scope>ALTERNATIVE SPLICING (ISOFORM LONG)</scope>
</reference>
<reference key="7">
    <citation type="submission" date="2002-04" db="EMBL/GenBank/DDBJ databases">
        <title>cDNA clones of human proteins involved in signal transduction sequenced by the Guthrie cDNA resource center (www.cdna.org).</title>
        <authorList>
            <person name="Puhl H.L. III"/>
            <person name="Ikeda S.R."/>
            <person name="Aronstam R.S."/>
        </authorList>
    </citation>
    <scope>NUCLEOTIDE SEQUENCE [LARGE SCALE MRNA] (ISOFORM LONG)</scope>
    <source>
        <tissue>Brain</tissue>
    </source>
</reference>
<reference key="8">
    <citation type="submission" date="2004-06" db="EMBL/GenBank/DDBJ databases">
        <title>Cloning of human full open reading frames in Gateway(TM) system entry vector (pDONR201).</title>
        <authorList>
            <person name="Ebert L."/>
            <person name="Schick M."/>
            <person name="Neubert P."/>
            <person name="Schatten R."/>
            <person name="Henze S."/>
            <person name="Korn B."/>
        </authorList>
    </citation>
    <scope>NUCLEOTIDE SEQUENCE [LARGE SCALE MRNA]</scope>
</reference>
<reference key="9">
    <citation type="journal article" date="2004" name="Genome Res.">
        <title>The status, quality, and expansion of the NIH full-length cDNA project: the Mammalian Gene Collection (MGC).</title>
        <authorList>
            <consortium name="The MGC Project Team"/>
        </authorList>
    </citation>
    <scope>NUCLEOTIDE SEQUENCE [LARGE SCALE MRNA]</scope>
    <source>
        <tissue>Mammary gland</tissue>
    </source>
</reference>
<reference key="10">
    <citation type="journal article" date="2002" name="FEBS Lett.">
        <title>Melanophilin directly links Rab27a and myosin Va through its distinct coiled-coil regions.</title>
        <authorList>
            <person name="Nagashima K."/>
            <person name="Torii S."/>
            <person name="Yi Z."/>
            <person name="Igarashi M."/>
            <person name="Okamoto K."/>
            <person name="Takeuchi T."/>
            <person name="Izumi T."/>
        </authorList>
    </citation>
    <scope>INTERACTION WITH MLPH</scope>
</reference>
<reference key="11">
    <citation type="journal article" date="2003" name="J. Proteome Res.">
        <title>Proteomic analysis of early melanosomes: identification of novel melanosomal proteins.</title>
        <authorList>
            <person name="Basrur V."/>
            <person name="Yang F."/>
            <person name="Kushimoto T."/>
            <person name="Higashimoto Y."/>
            <person name="Yasumoto K."/>
            <person name="Valencia J."/>
            <person name="Muller J."/>
            <person name="Vieira W.D."/>
            <person name="Watabe H."/>
            <person name="Shabanowitz J."/>
            <person name="Hearing V.J."/>
            <person name="Hunt D.F."/>
            <person name="Appella E."/>
        </authorList>
    </citation>
    <scope>SUBCELLULAR LOCATION [LARGE SCALE ANALYSIS]</scope>
    <source>
        <tissue>Melanoma</tissue>
    </source>
</reference>
<reference key="12">
    <citation type="journal article" date="2005" name="Mol. Biol. Cell">
        <title>Munc13-4 is an effector of rab27a and controls secretion of lysosomes in hematopoietic cells.</title>
        <authorList>
            <person name="Neeft M."/>
            <person name="Wieffer M."/>
            <person name="de Jong A.S."/>
            <person name="Negroiu G."/>
            <person name="Metz C.H."/>
            <person name="van Loon A."/>
            <person name="Griffith J."/>
            <person name="Krijgsveld J."/>
            <person name="Wulffraat N."/>
            <person name="Koch H."/>
            <person name="Heck A.J.R."/>
            <person name="Brose N."/>
            <person name="Kleijmeer M."/>
            <person name="van der Sluijs P."/>
        </authorList>
    </citation>
    <scope>SUBCELLULAR LOCATION</scope>
    <scope>INTERACTION WITH UNC13D</scope>
    <scope>TISSUE SPECIFICITY</scope>
    <scope>MUTAGENESIS OF THR-23</scope>
    <scope>CHARACTERIZATION OF VARIANT GS2 GLY-73</scope>
</reference>
<reference key="13">
    <citation type="journal article" date="2006" name="J. Proteome Res.">
        <title>Proteomic and bioinformatic characterization of the biogenesis and function of melanosomes.</title>
        <authorList>
            <person name="Chi A."/>
            <person name="Valencia J.C."/>
            <person name="Hu Z.-Z."/>
            <person name="Watabe H."/>
            <person name="Yamaguchi H."/>
            <person name="Mangini N.J."/>
            <person name="Huang H."/>
            <person name="Canfield V.A."/>
            <person name="Cheng K.C."/>
            <person name="Yang F."/>
            <person name="Abe R."/>
            <person name="Yamagishi S."/>
            <person name="Shabanowitz J."/>
            <person name="Hearing V.J."/>
            <person name="Wu C."/>
            <person name="Appella E."/>
            <person name="Hunt D.F."/>
        </authorList>
    </citation>
    <scope>SUBCELLULAR LOCATION [LARGE SCALE ANALYSIS]</scope>
    <source>
        <tissue>Melanoma</tissue>
    </source>
</reference>
<reference key="14">
    <citation type="journal article" date="2007" name="Nat. Immunol.">
        <title>Secretory cytotoxic granule maturation and exocytosis require the effector protein hMunc13-4.</title>
        <authorList>
            <person name="Menager M.M."/>
            <person name="Menasche G."/>
            <person name="Romao M."/>
            <person name="Knapnougel P."/>
            <person name="Ho C.-H."/>
            <person name="Garfa M."/>
            <person name="Raposo G."/>
            <person name="Feldmann J."/>
            <person name="Fischer A."/>
            <person name="de Saint Basile G."/>
        </authorList>
    </citation>
    <scope>INTERACTION WITH UNC13D</scope>
    <scope>SUBCELLULAR LOCATION</scope>
</reference>
<reference key="15">
    <citation type="journal article" date="2008" name="Blood">
        <title>A newly identified isoform of Slp2a associates with Rab27a in cytotoxic T cells and participates in cytotoxic granule secretion.</title>
        <authorList>
            <person name="Menasche G."/>
            <person name="Menager M.M."/>
            <person name="Lefebvre J.M."/>
            <person name="Deutsch E."/>
            <person name="Athman R."/>
            <person name="Lambert N."/>
            <person name="Mahlaoui N."/>
            <person name="Court M."/>
            <person name="Garin J."/>
            <person name="Fischer A."/>
            <person name="de Saint Basile G."/>
        </authorList>
    </citation>
    <scope>FUNCTION</scope>
    <scope>INTERACTION WITH SYTL2</scope>
    <scope>MUTAGENESIS OF LEU-70 AND ALA-76</scope>
</reference>
<reference key="16">
    <citation type="journal article" date="2010" name="J. Biol. Chem.">
        <title>Assembly of the biogenesis of lysosome-related organelles complex-3 (BLOC-3) and its interaction with Rab9.</title>
        <authorList>
            <person name="Kloer D.P."/>
            <person name="Rojas R."/>
            <person name="Ivan V."/>
            <person name="Moriyama K."/>
            <person name="van Vlijmen T."/>
            <person name="Murthy N."/>
            <person name="Ghirlando R."/>
            <person name="van der Sluijs P."/>
            <person name="Hurley J.H."/>
            <person name="Bonifacino J.S."/>
        </authorList>
    </citation>
    <scope>LACK OF INTERACTION WITH THE BLOC-3 COMPLEX</scope>
</reference>
<reference key="17">
    <citation type="journal article" date="2011" name="BMC Syst. Biol.">
        <title>Initial characterization of the human central proteome.</title>
        <authorList>
            <person name="Burkard T.R."/>
            <person name="Planyavsky M."/>
            <person name="Kaupe I."/>
            <person name="Breitwieser F.P."/>
            <person name="Buerckstuemmer T."/>
            <person name="Bennett K.L."/>
            <person name="Superti-Furga G."/>
            <person name="Colinge J."/>
        </authorList>
    </citation>
    <scope>IDENTIFICATION BY MASS SPECTROMETRY [LARGE SCALE ANALYSIS]</scope>
</reference>
<reference key="18">
    <citation type="journal article" date="2012" name="Mol. Cell. Proteomics">
        <title>Comparative large-scale characterisation of plant vs. mammal proteins reveals similar and idiosyncratic N-alpha acetylation features.</title>
        <authorList>
            <person name="Bienvenut W.V."/>
            <person name="Sumpton D."/>
            <person name="Martinez A."/>
            <person name="Lilla S."/>
            <person name="Espagne C."/>
            <person name="Meinnel T."/>
            <person name="Giglione C."/>
        </authorList>
    </citation>
    <scope>ACETYLATION [LARGE SCALE ANALYSIS] AT SER-2</scope>
    <scope>CLEAVAGE OF INITIATOR METHIONINE [LARGE SCALE ANALYSIS]</scope>
    <scope>IDENTIFICATION BY MASS SPECTROMETRY [LARGE SCALE ANALYSIS]</scope>
</reference>
<reference key="19">
    <citation type="journal article" date="2013" name="J. Proteome Res.">
        <title>Toward a comprehensive characterization of a human cancer cell phosphoproteome.</title>
        <authorList>
            <person name="Zhou H."/>
            <person name="Di Palma S."/>
            <person name="Preisinger C."/>
            <person name="Peng M."/>
            <person name="Polat A.N."/>
            <person name="Heck A.J."/>
            <person name="Mohammed S."/>
        </authorList>
    </citation>
    <scope>PHOSPHORYLATION [LARGE SCALE ANALYSIS] AT SER-2</scope>
    <scope>IDENTIFICATION BY MASS SPECTROMETRY [LARGE SCALE ANALYSIS]</scope>
    <source>
        <tissue>Erythroleukemia</tissue>
    </source>
</reference>
<reference key="20">
    <citation type="journal article" date="2015" name="Proteomics">
        <title>N-terminome analysis of the human mitochondrial proteome.</title>
        <authorList>
            <person name="Vaca Jacome A.S."/>
            <person name="Rabilloud T."/>
            <person name="Schaeffer-Reiss C."/>
            <person name="Rompais M."/>
            <person name="Ayoub D."/>
            <person name="Lane L."/>
            <person name="Bairoch A."/>
            <person name="Van Dorsselaer A."/>
            <person name="Carapito C."/>
        </authorList>
    </citation>
    <scope>ACETYLATION [LARGE SCALE ANALYSIS] AT SER-2</scope>
    <scope>CLEAVAGE OF INITIATOR METHIONINE [LARGE SCALE ANALYSIS]</scope>
    <scope>IDENTIFICATION BY MASS SPECTROMETRY [LARGE SCALE ANALYSIS]</scope>
</reference>
<reference key="21">
    <citation type="journal article" date="2019" name="Biochim. Biophys. Acta">
        <title>DENN domain-containing protein FAM45A regulates the homeostasis of late/multivesicular endosomes.</title>
        <authorList>
            <person name="Zhang J."/>
            <person name="Zhang K."/>
            <person name="Qi L."/>
            <person name="Hu Q."/>
            <person name="Shen Z."/>
            <person name="Liu B."/>
            <person name="Deng J."/>
            <person name="Zhang C."/>
            <person name="Zhang Y."/>
        </authorList>
    </citation>
    <scope>FUNCTION</scope>
    <scope>SUBCELLULAR LOCATION</scope>
    <scope>INTERACTION WITH DENND10</scope>
    <scope>ACTIVITY REGULATION</scope>
    <scope>MUTAGENESIS OF THR-23 AND GLN-78</scope>
</reference>
<reference key="22">
    <citation type="journal article" date="2000" name="Nat. Genet.">
        <title>Mutations in RAB27A cause Griscelli syndrome associated with haemophagocytic syndrome.</title>
        <authorList>
            <person name="Menasche G."/>
            <person name="Pastural E."/>
            <person name="Feldmann J."/>
            <person name="Certain S."/>
            <person name="Ersoy F."/>
            <person name="Dupuis S."/>
            <person name="Wulffraat N."/>
            <person name="Bianchi D."/>
            <person name="Fischer A."/>
            <person name="Le Deist F."/>
            <person name="de Saint Basile G."/>
        </authorList>
    </citation>
    <scope>VARIANTS GS2 GLY-73; PRO-130 AND PRO-152</scope>
</reference>
<reference key="23">
    <citation type="journal article" date="2002" name="Am. J. Hum. Genet.">
        <title>Evidence that Griscelli syndrome with neurological involvement is caused by mutations in RAB27A, not MYO5A.</title>
        <authorList>
            <person name="Anikster Y."/>
            <person name="Huizing M."/>
            <person name="Anderson P.D."/>
            <person name="Fitzpatrick D.L."/>
            <person name="Klar A."/>
            <person name="Gross-Kieselstein E."/>
            <person name="Berkun Y."/>
            <person name="Shazberg G."/>
            <person name="Gahl W.A."/>
            <person name="Hurvitz H."/>
        </authorList>
    </citation>
    <scope>INVOLVEMENT IN GRISCELLI SYNDROME</scope>
</reference>
<reference key="24">
    <citation type="journal article" date="2002" name="Am. J. Hum. Genet.">
        <authorList>
            <person name="Anikster Y."/>
            <person name="Huizing M."/>
            <person name="Anderson P.D."/>
            <person name="Fitzpatrick D.L."/>
            <person name="Klar A."/>
            <person name="Gross-Kieselstein E."/>
            <person name="Berkun Y."/>
            <person name="Shazberg G."/>
            <person name="Gahl W.A."/>
            <person name="Hurvitz H."/>
        </authorList>
    </citation>
    <scope>ERRATUM OF PUBMED:12058346</scope>
</reference>
<reference key="25">
    <citation type="journal article" date="2003" name="Blood">
        <title>Biochemical and functional characterization of Rab27a mutations occurring in Griscelli syndrome patients.</title>
        <authorList>
            <person name="Menasche G."/>
            <person name="Feldmann J."/>
            <person name="Houdusse A."/>
            <person name="Desaymard C."/>
            <person name="Fischer A."/>
            <person name="Goud B."/>
            <person name="de Saint Basile G."/>
        </authorList>
    </citation>
    <scope>CHARACTERIZATION OF VARIANTS GS2 GLY-73; PRO-130 AND PRO-152</scope>
</reference>
<reference key="26">
    <citation type="journal article" date="2003" name="J. Biol. Chem.">
        <title>Characterization of the molecular defects in Rab27a, caused by RAB27A missense mutations found in patients with Griscelli syndrome.</title>
        <authorList>
            <person name="Bahadoran P."/>
            <person name="Busca R."/>
            <person name="Chiaverini C."/>
            <person name="Westbroek W."/>
            <person name="Lambert J."/>
            <person name="Bille K."/>
            <person name="Valony G."/>
            <person name="Fukuda M."/>
            <person name="Naeyaert J.-M."/>
            <person name="Ortonne J.-P."/>
            <person name="Ballotti R."/>
        </authorList>
    </citation>
    <scope>CHARACTERIZATION OF VARIANTS GS2 GLY-73; PRO-130 AND PRO-152</scope>
</reference>
<dbReference type="EC" id="3.6.5.2" evidence="16 17"/>
<dbReference type="EMBL" id="U38654">
    <property type="protein sequence ID" value="AAC50271.2"/>
    <property type="molecule type" value="mRNA"/>
</dbReference>
<dbReference type="EMBL" id="U57094">
    <property type="protein sequence ID" value="AAC51195.1"/>
    <property type="molecule type" value="mRNA"/>
</dbReference>
<dbReference type="EMBL" id="AF154840">
    <property type="protein sequence ID" value="AAD47629.1"/>
    <property type="molecule type" value="Genomic_DNA"/>
</dbReference>
<dbReference type="EMBL" id="AF154836">
    <property type="protein sequence ID" value="AAD47629.1"/>
    <property type="status" value="JOINED"/>
    <property type="molecule type" value="Genomic_DNA"/>
</dbReference>
<dbReference type="EMBL" id="AF154837">
    <property type="protein sequence ID" value="AAD47629.1"/>
    <property type="status" value="JOINED"/>
    <property type="molecule type" value="Genomic_DNA"/>
</dbReference>
<dbReference type="EMBL" id="AF154838">
    <property type="protein sequence ID" value="AAD47629.1"/>
    <property type="status" value="JOINED"/>
    <property type="molecule type" value="Genomic_DNA"/>
</dbReference>
<dbReference type="EMBL" id="AF154839">
    <property type="protein sequence ID" value="AAD47629.1"/>
    <property type="status" value="JOINED"/>
    <property type="molecule type" value="Genomic_DNA"/>
</dbReference>
<dbReference type="EMBL" id="AF125393">
    <property type="protein sequence ID" value="AAD43049.1"/>
    <property type="molecule type" value="mRNA"/>
</dbReference>
<dbReference type="EMBL" id="AF443871">
    <property type="protein sequence ID" value="AAL39097.1"/>
    <property type="molecule type" value="Genomic_DNA"/>
</dbReference>
<dbReference type="EMBL" id="AF498953">
    <property type="protein sequence ID" value="AAM21101.1"/>
    <property type="molecule type" value="mRNA"/>
</dbReference>
<dbReference type="EMBL" id="CR536496">
    <property type="protein sequence ID" value="CAG38735.1"/>
    <property type="molecule type" value="mRNA"/>
</dbReference>
<dbReference type="EMBL" id="CR541693">
    <property type="protein sequence ID" value="CAG46494.1"/>
    <property type="molecule type" value="mRNA"/>
</dbReference>
<dbReference type="EMBL" id="BC107680">
    <property type="protein sequence ID" value="AAI07681.1"/>
    <property type="molecule type" value="mRNA"/>
</dbReference>
<dbReference type="CCDS" id="CCDS10153.1">
    <molecule id="P51159-1"/>
</dbReference>
<dbReference type="PIR" id="I39198">
    <property type="entry name" value="I39198"/>
</dbReference>
<dbReference type="RefSeq" id="NP_004571.2">
    <molecule id="P51159-1"/>
    <property type="nucleotide sequence ID" value="NM_004580.4"/>
</dbReference>
<dbReference type="RefSeq" id="NP_899057.1">
    <molecule id="P51159-1"/>
    <property type="nucleotide sequence ID" value="NM_183234.2"/>
</dbReference>
<dbReference type="RefSeq" id="NP_899058.1">
    <molecule id="P51159-1"/>
    <property type="nucleotide sequence ID" value="NM_183235.3"/>
</dbReference>
<dbReference type="RefSeq" id="NP_899059.1">
    <molecule id="P51159-1"/>
    <property type="nucleotide sequence ID" value="NM_183236.3"/>
</dbReference>
<dbReference type="RefSeq" id="XP_005254633.1">
    <molecule id="P51159-1"/>
    <property type="nucleotide sequence ID" value="XM_005254576.6"/>
</dbReference>
<dbReference type="RefSeq" id="XP_011520154.1">
    <molecule id="P51159-1"/>
    <property type="nucleotide sequence ID" value="XM_011521852.1"/>
</dbReference>
<dbReference type="RefSeq" id="XP_011520156.1">
    <molecule id="P51159-1"/>
    <property type="nucleotide sequence ID" value="XM_011521854.1"/>
</dbReference>
<dbReference type="RefSeq" id="XP_011520157.1">
    <molecule id="P51159-1"/>
    <property type="nucleotide sequence ID" value="XM_011521855.4"/>
</dbReference>
<dbReference type="RefSeq" id="XP_011520158.1">
    <molecule id="P51159-1"/>
    <property type="nucleotide sequence ID" value="XM_011521856.3"/>
</dbReference>
<dbReference type="RefSeq" id="XP_047288872.1">
    <molecule id="P51159-1"/>
    <property type="nucleotide sequence ID" value="XM_047432916.1"/>
</dbReference>
<dbReference type="RefSeq" id="XP_047288873.1">
    <molecule id="P51159-1"/>
    <property type="nucleotide sequence ID" value="XM_047432917.1"/>
</dbReference>
<dbReference type="RefSeq" id="XP_047288874.1">
    <molecule id="P51159-1"/>
    <property type="nucleotide sequence ID" value="XM_047432918.1"/>
</dbReference>
<dbReference type="RefSeq" id="XP_047288875.1">
    <molecule id="P51159-1"/>
    <property type="nucleotide sequence ID" value="XM_047432919.1"/>
</dbReference>
<dbReference type="RefSeq" id="XP_047288876.1">
    <molecule id="P51159-1"/>
    <property type="nucleotide sequence ID" value="XM_047432920.1"/>
</dbReference>
<dbReference type="RefSeq" id="XP_047288877.1">
    <molecule id="P51159-1"/>
    <property type="nucleotide sequence ID" value="XM_047432921.1"/>
</dbReference>
<dbReference type="RefSeq" id="XP_047288878.1">
    <molecule id="P51159-1"/>
    <property type="nucleotide sequence ID" value="XM_047432922.1"/>
</dbReference>
<dbReference type="RefSeq" id="XP_047288879.1">
    <molecule id="P51159-1"/>
    <property type="nucleotide sequence ID" value="XM_047432923.1"/>
</dbReference>
<dbReference type="RefSeq" id="XP_054234529.1">
    <molecule id="P51159-1"/>
    <property type="nucleotide sequence ID" value="XM_054378554.1"/>
</dbReference>
<dbReference type="RefSeq" id="XP_054234530.1">
    <molecule id="P51159-1"/>
    <property type="nucleotide sequence ID" value="XM_054378555.1"/>
</dbReference>
<dbReference type="RefSeq" id="XP_054234531.1">
    <molecule id="P51159-1"/>
    <property type="nucleotide sequence ID" value="XM_054378556.1"/>
</dbReference>
<dbReference type="RefSeq" id="XP_054234532.1">
    <molecule id="P51159-1"/>
    <property type="nucleotide sequence ID" value="XM_054378557.1"/>
</dbReference>
<dbReference type="RefSeq" id="XP_054234533.1">
    <molecule id="P51159-1"/>
    <property type="nucleotide sequence ID" value="XM_054378558.1"/>
</dbReference>
<dbReference type="RefSeq" id="XP_054234534.1">
    <molecule id="P51159-1"/>
    <property type="nucleotide sequence ID" value="XM_054378559.1"/>
</dbReference>
<dbReference type="RefSeq" id="XP_054234535.1">
    <molecule id="P51159-1"/>
    <property type="nucleotide sequence ID" value="XM_054378560.1"/>
</dbReference>
<dbReference type="RefSeq" id="XP_054234536.1">
    <molecule id="P51159-1"/>
    <property type="nucleotide sequence ID" value="XM_054378561.1"/>
</dbReference>
<dbReference type="RefSeq" id="XP_054234537.1">
    <molecule id="P51159-1"/>
    <property type="nucleotide sequence ID" value="XM_054378562.1"/>
</dbReference>
<dbReference type="RefSeq" id="XP_054234538.1">
    <molecule id="P51159-1"/>
    <property type="nucleotide sequence ID" value="XM_054378563.1"/>
</dbReference>
<dbReference type="RefSeq" id="XP_054234539.1">
    <molecule id="P51159-1"/>
    <property type="nucleotide sequence ID" value="XM_054378564.1"/>
</dbReference>
<dbReference type="RefSeq" id="XP_054234540.1">
    <molecule id="P51159-1"/>
    <property type="nucleotide sequence ID" value="XM_054378565.1"/>
</dbReference>
<dbReference type="PDB" id="6HUF">
    <property type="method" value="X-ray"/>
    <property type="resolution" value="2.82 A"/>
    <property type="chains" value="A/B/C/D/E/F/G/H/I/J/K/L/M/N/O/P=2-192"/>
</dbReference>
<dbReference type="PDB" id="7OPP">
    <property type="method" value="X-ray"/>
    <property type="resolution" value="2.32 A"/>
    <property type="chains" value="A/C=1-192"/>
</dbReference>
<dbReference type="PDB" id="7OPQ">
    <property type="method" value="X-ray"/>
    <property type="resolution" value="2.23 A"/>
    <property type="chains" value="A/B=1-192"/>
</dbReference>
<dbReference type="PDB" id="7OPR">
    <property type="method" value="X-ray"/>
    <property type="resolution" value="2.32 A"/>
    <property type="chains" value="A/B=1-192"/>
</dbReference>
<dbReference type="PDB" id="8P3G">
    <property type="method" value="X-ray"/>
    <property type="resolution" value="2.13 A"/>
    <property type="chains" value="A/B=1-192"/>
</dbReference>
<dbReference type="PDB" id="8P3H">
    <property type="method" value="X-ray"/>
    <property type="resolution" value="2.76 A"/>
    <property type="chains" value="A/B=1-192"/>
</dbReference>
<dbReference type="PDB" id="8P3I">
    <property type="method" value="X-ray"/>
    <property type="resolution" value="2.00 A"/>
    <property type="chains" value="A/B=1-192"/>
</dbReference>
<dbReference type="PDB" id="8P3J">
    <property type="method" value="X-ray"/>
    <property type="resolution" value="2.16 A"/>
    <property type="chains" value="A/B=1-192"/>
</dbReference>
<dbReference type="PDB" id="8P3K">
    <property type="method" value="X-ray"/>
    <property type="resolution" value="2.58 A"/>
    <property type="chains" value="A/B=1-192"/>
</dbReference>
<dbReference type="PDBsum" id="6HUF"/>
<dbReference type="PDBsum" id="7OPP"/>
<dbReference type="PDBsum" id="7OPQ"/>
<dbReference type="PDBsum" id="7OPR"/>
<dbReference type="PDBsum" id="8P3G"/>
<dbReference type="PDBsum" id="8P3H"/>
<dbReference type="PDBsum" id="8P3I"/>
<dbReference type="PDBsum" id="8P3J"/>
<dbReference type="PDBsum" id="8P3K"/>
<dbReference type="SMR" id="P51159"/>
<dbReference type="BioGRID" id="111811">
    <property type="interactions" value="90"/>
</dbReference>
<dbReference type="CORUM" id="P51159"/>
<dbReference type="DIP" id="DIP-44244N"/>
<dbReference type="FunCoup" id="P51159">
    <property type="interactions" value="785"/>
</dbReference>
<dbReference type="IntAct" id="P51159">
    <property type="interactions" value="75"/>
</dbReference>
<dbReference type="MINT" id="P51159"/>
<dbReference type="STRING" id="9606.ENSP00000379601"/>
<dbReference type="ChEMBL" id="CHEMBL4105702"/>
<dbReference type="DrugCentral" id="P51159"/>
<dbReference type="GuidetoPHARMACOLOGY" id="2916"/>
<dbReference type="GlyGen" id="P51159">
    <property type="glycosylation" value="1 site, 1 O-linked glycan (1 site)"/>
</dbReference>
<dbReference type="iPTMnet" id="P51159"/>
<dbReference type="PhosphoSitePlus" id="P51159"/>
<dbReference type="SwissPalm" id="P51159"/>
<dbReference type="BioMuta" id="RAB27A"/>
<dbReference type="DMDM" id="116242744"/>
<dbReference type="jPOST" id="P51159"/>
<dbReference type="MassIVE" id="P51159"/>
<dbReference type="PaxDb" id="9606-ENSP00000379601"/>
<dbReference type="PeptideAtlas" id="P51159"/>
<dbReference type="ProteomicsDB" id="56289">
    <molecule id="P51159-1"/>
</dbReference>
<dbReference type="ProteomicsDB" id="56290">
    <molecule id="P51159-2"/>
</dbReference>
<dbReference type="Pumba" id="P51159"/>
<dbReference type="Antibodypedia" id="687">
    <property type="antibodies" value="465 antibodies from 38 providers"/>
</dbReference>
<dbReference type="DNASU" id="5873"/>
<dbReference type="Ensembl" id="ENST00000336787.6">
    <molecule id="P51159-1"/>
    <property type="protein sequence ID" value="ENSP00000337761.1"/>
    <property type="gene ID" value="ENSG00000069974.17"/>
</dbReference>
<dbReference type="Ensembl" id="ENST00000396307.6">
    <molecule id="P51159-1"/>
    <property type="protein sequence ID" value="ENSP00000379601.2"/>
    <property type="gene ID" value="ENSG00000069974.17"/>
</dbReference>
<dbReference type="Ensembl" id="ENST00000564609.5">
    <molecule id="P51159-1"/>
    <property type="protein sequence ID" value="ENSP00000455012.1"/>
    <property type="gene ID" value="ENSG00000069974.17"/>
</dbReference>
<dbReference type="Ensembl" id="ENST00000569493.5">
    <molecule id="P51159-1"/>
    <property type="protein sequence ID" value="ENSP00000456059.1"/>
    <property type="gene ID" value="ENSG00000069974.17"/>
</dbReference>
<dbReference type="Ensembl" id="ENST00000697642.1">
    <molecule id="P51159-1"/>
    <property type="protein sequence ID" value="ENSP00000513368.1"/>
    <property type="gene ID" value="ENSG00000069974.17"/>
</dbReference>
<dbReference type="Ensembl" id="ENST00000697643.1">
    <molecule id="P51159-1"/>
    <property type="protein sequence ID" value="ENSP00000513369.1"/>
    <property type="gene ID" value="ENSG00000069974.17"/>
</dbReference>
<dbReference type="GeneID" id="5873"/>
<dbReference type="KEGG" id="hsa:5873"/>
<dbReference type="MANE-Select" id="ENST00000336787.6">
    <property type="protein sequence ID" value="ENSP00000337761.1"/>
    <property type="RefSeq nucleotide sequence ID" value="NM_183235.3"/>
    <property type="RefSeq protein sequence ID" value="NP_899058.1"/>
</dbReference>
<dbReference type="UCSC" id="uc002aco.4">
    <molecule id="P51159-1"/>
    <property type="organism name" value="human"/>
</dbReference>
<dbReference type="AGR" id="HGNC:9766"/>
<dbReference type="CTD" id="5873"/>
<dbReference type="DisGeNET" id="5873"/>
<dbReference type="GeneCards" id="RAB27A"/>
<dbReference type="HGNC" id="HGNC:9766">
    <property type="gene designation" value="RAB27A"/>
</dbReference>
<dbReference type="HPA" id="ENSG00000069974">
    <property type="expression patterns" value="Tissue enhanced (stomach)"/>
</dbReference>
<dbReference type="MalaCards" id="RAB27A"/>
<dbReference type="MIM" id="603868">
    <property type="type" value="gene"/>
</dbReference>
<dbReference type="MIM" id="607624">
    <property type="type" value="phenotype"/>
</dbReference>
<dbReference type="neXtProt" id="NX_P51159"/>
<dbReference type="OpenTargets" id="ENSG00000069974"/>
<dbReference type="Orphanet" id="79477">
    <property type="disease" value="Griscelli syndrome type 2"/>
</dbReference>
<dbReference type="PharmGKB" id="PA34117"/>
<dbReference type="VEuPathDB" id="HostDB:ENSG00000069974"/>
<dbReference type="eggNOG" id="KOG0081">
    <property type="taxonomic scope" value="Eukaryota"/>
</dbReference>
<dbReference type="GeneTree" id="ENSGT00940000156218"/>
<dbReference type="InParanoid" id="P51159"/>
<dbReference type="OMA" id="MHAYTED"/>
<dbReference type="OrthoDB" id="9989112at2759"/>
<dbReference type="PAN-GO" id="P51159">
    <property type="GO annotations" value="7 GO annotations based on evolutionary models"/>
</dbReference>
<dbReference type="PhylomeDB" id="P51159"/>
<dbReference type="TreeFam" id="TF312895"/>
<dbReference type="PathwayCommons" id="P51159"/>
<dbReference type="Reactome" id="R-HSA-264876">
    <property type="pathway name" value="Insulin processing"/>
</dbReference>
<dbReference type="Reactome" id="R-HSA-6798695">
    <property type="pathway name" value="Neutrophil degranulation"/>
</dbReference>
<dbReference type="Reactome" id="R-HSA-8873719">
    <property type="pathway name" value="RAB geranylgeranylation"/>
</dbReference>
<dbReference type="Reactome" id="R-HSA-8876198">
    <property type="pathway name" value="RAB GEFs exchange GTP for GDP on RABs"/>
</dbReference>
<dbReference type="Reactome" id="R-HSA-9824585">
    <property type="pathway name" value="Regulation of MITF-M-dependent genes involved in pigmentation"/>
</dbReference>
<dbReference type="SignaLink" id="P51159"/>
<dbReference type="BioGRID-ORCS" id="5873">
    <property type="hits" value="11 hits in 1161 CRISPR screens"/>
</dbReference>
<dbReference type="ChiTaRS" id="RAB27A">
    <property type="organism name" value="human"/>
</dbReference>
<dbReference type="GeneWiki" id="RAB27A"/>
<dbReference type="GenomeRNAi" id="5873"/>
<dbReference type="Pharos" id="P51159">
    <property type="development level" value="Tchem"/>
</dbReference>
<dbReference type="PRO" id="PR:P51159"/>
<dbReference type="Proteomes" id="UP000005640">
    <property type="component" value="Chromosome 15"/>
</dbReference>
<dbReference type="RNAct" id="P51159">
    <property type="molecule type" value="protein"/>
</dbReference>
<dbReference type="Bgee" id="ENSG00000069974">
    <property type="expression patterns" value="Expressed in trabecular bone tissue and 193 other cell types or tissues"/>
</dbReference>
<dbReference type="ExpressionAtlas" id="P51159">
    <property type="expression patterns" value="baseline and differential"/>
</dbReference>
<dbReference type="GO" id="GO:0016324">
    <property type="term" value="C:apical plasma membrane"/>
    <property type="evidence" value="ECO:0000318"/>
    <property type="project" value="GO_Central"/>
</dbReference>
<dbReference type="GO" id="GO:0005829">
    <property type="term" value="C:cytosol"/>
    <property type="evidence" value="ECO:0000304"/>
    <property type="project" value="Reactome"/>
</dbReference>
<dbReference type="GO" id="GO:0030425">
    <property type="term" value="C:dendrite"/>
    <property type="evidence" value="ECO:0000314"/>
    <property type="project" value="UniProtKB"/>
</dbReference>
<dbReference type="GO" id="GO:0070382">
    <property type="term" value="C:exocytic vesicle"/>
    <property type="evidence" value="ECO:0000314"/>
    <property type="project" value="UniProtKB"/>
</dbReference>
<dbReference type="GO" id="GO:0070062">
    <property type="term" value="C:extracellular exosome"/>
    <property type="evidence" value="ECO:0007005"/>
    <property type="project" value="UniProtKB"/>
</dbReference>
<dbReference type="GO" id="GO:0005576">
    <property type="term" value="C:extracellular region"/>
    <property type="evidence" value="ECO:0000304"/>
    <property type="project" value="Reactome"/>
</dbReference>
<dbReference type="GO" id="GO:0005794">
    <property type="term" value="C:Golgi apparatus"/>
    <property type="evidence" value="ECO:0000318"/>
    <property type="project" value="GO_Central"/>
</dbReference>
<dbReference type="GO" id="GO:0005770">
    <property type="term" value="C:late endosome"/>
    <property type="evidence" value="ECO:0000314"/>
    <property type="project" value="UniProtKB"/>
</dbReference>
<dbReference type="GO" id="GO:0005764">
    <property type="term" value="C:lysosome"/>
    <property type="evidence" value="ECO:0000314"/>
    <property type="project" value="UniProtKB"/>
</dbReference>
<dbReference type="GO" id="GO:0042470">
    <property type="term" value="C:melanosome"/>
    <property type="evidence" value="ECO:0000314"/>
    <property type="project" value="UniProtKB"/>
</dbReference>
<dbReference type="GO" id="GO:0033162">
    <property type="term" value="C:melanosome membrane"/>
    <property type="evidence" value="ECO:0000304"/>
    <property type="project" value="Reactome"/>
</dbReference>
<dbReference type="GO" id="GO:0032585">
    <property type="term" value="C:multivesicular body membrane"/>
    <property type="evidence" value="ECO:0000314"/>
    <property type="project" value="UniProtKB"/>
</dbReference>
<dbReference type="GO" id="GO:0001750">
    <property type="term" value="C:photoreceptor outer segment"/>
    <property type="evidence" value="ECO:0007669"/>
    <property type="project" value="Ensembl"/>
</dbReference>
<dbReference type="GO" id="GO:0030141">
    <property type="term" value="C:secretory granule"/>
    <property type="evidence" value="ECO:0000318"/>
    <property type="project" value="GO_Central"/>
</dbReference>
<dbReference type="GO" id="GO:0035580">
    <property type="term" value="C:specific granule lumen"/>
    <property type="evidence" value="ECO:0000304"/>
    <property type="project" value="Reactome"/>
</dbReference>
<dbReference type="GO" id="GO:0033093">
    <property type="term" value="C:Weibel-Palade body"/>
    <property type="evidence" value="ECO:0007669"/>
    <property type="project" value="Ensembl"/>
</dbReference>
<dbReference type="GO" id="GO:0003925">
    <property type="term" value="F:G protein activity"/>
    <property type="evidence" value="ECO:0007669"/>
    <property type="project" value="UniProtKB-EC"/>
</dbReference>
<dbReference type="GO" id="GO:0019003">
    <property type="term" value="F:GDP binding"/>
    <property type="evidence" value="ECO:0000314"/>
    <property type="project" value="UniProtKB"/>
</dbReference>
<dbReference type="GO" id="GO:0005525">
    <property type="term" value="F:GTP binding"/>
    <property type="evidence" value="ECO:0000314"/>
    <property type="project" value="UniProtKB"/>
</dbReference>
<dbReference type="GO" id="GO:0003924">
    <property type="term" value="F:GTPase activity"/>
    <property type="evidence" value="ECO:0000250"/>
    <property type="project" value="UniProtKB"/>
</dbReference>
<dbReference type="GO" id="GO:0031489">
    <property type="term" value="F:myosin V binding"/>
    <property type="evidence" value="ECO:0007669"/>
    <property type="project" value="Ensembl"/>
</dbReference>
<dbReference type="GO" id="GO:0019904">
    <property type="term" value="F:protein domain specific binding"/>
    <property type="evidence" value="ECO:0007669"/>
    <property type="project" value="Ensembl"/>
</dbReference>
<dbReference type="GO" id="GO:0019882">
    <property type="term" value="P:antigen processing and presentation"/>
    <property type="evidence" value="ECO:0000315"/>
    <property type="project" value="UniProtKB"/>
</dbReference>
<dbReference type="GO" id="GO:0007596">
    <property type="term" value="P:blood coagulation"/>
    <property type="evidence" value="ECO:0007669"/>
    <property type="project" value="Ensembl"/>
</dbReference>
<dbReference type="GO" id="GO:0097278">
    <property type="term" value="P:complement-dependent cytotoxicity"/>
    <property type="evidence" value="ECO:0000315"/>
    <property type="project" value="UniProtKB"/>
</dbReference>
<dbReference type="GO" id="GO:0043316">
    <property type="term" value="P:cytotoxic T cell degranulation"/>
    <property type="evidence" value="ECO:0007669"/>
    <property type="project" value="Ensembl"/>
</dbReference>
<dbReference type="GO" id="GO:0006887">
    <property type="term" value="P:exocytosis"/>
    <property type="evidence" value="ECO:0000314"/>
    <property type="project" value="UniProtKB"/>
</dbReference>
<dbReference type="GO" id="GO:1990182">
    <property type="term" value="P:exosomal secretion"/>
    <property type="evidence" value="ECO:0000315"/>
    <property type="project" value="UniProtKB"/>
</dbReference>
<dbReference type="GO" id="GO:0030318">
    <property type="term" value="P:melanocyte differentiation"/>
    <property type="evidence" value="ECO:0007669"/>
    <property type="project" value="Ensembl"/>
</dbReference>
<dbReference type="GO" id="GO:0032400">
    <property type="term" value="P:melanosome localization"/>
    <property type="evidence" value="ECO:0000315"/>
    <property type="project" value="UniProtKB"/>
</dbReference>
<dbReference type="GO" id="GO:0032402">
    <property type="term" value="P:melanosome transport"/>
    <property type="evidence" value="ECO:0000303"/>
    <property type="project" value="UniProtKB"/>
</dbReference>
<dbReference type="GO" id="GO:0036257">
    <property type="term" value="P:multivesicular body organization"/>
    <property type="evidence" value="ECO:0000315"/>
    <property type="project" value="UniProtKB"/>
</dbReference>
<dbReference type="GO" id="GO:0071985">
    <property type="term" value="P:multivesicular body sorting pathway"/>
    <property type="evidence" value="ECO:0000315"/>
    <property type="project" value="UniProtKB"/>
</dbReference>
<dbReference type="GO" id="GO:0043320">
    <property type="term" value="P:natural killer cell degranulation"/>
    <property type="evidence" value="ECO:0007669"/>
    <property type="project" value="Ensembl"/>
</dbReference>
<dbReference type="GO" id="GO:1903435">
    <property type="term" value="P:positive regulation of constitutive secretory pathway"/>
    <property type="evidence" value="ECO:0000315"/>
    <property type="project" value="UniProtKB"/>
</dbReference>
<dbReference type="GO" id="GO:0045921">
    <property type="term" value="P:positive regulation of exocytosis"/>
    <property type="evidence" value="ECO:0000315"/>
    <property type="project" value="UniProtKB"/>
</dbReference>
<dbReference type="GO" id="GO:0010628">
    <property type="term" value="P:positive regulation of gene expression"/>
    <property type="evidence" value="ECO:0000315"/>
    <property type="project" value="UniProtKB"/>
</dbReference>
<dbReference type="GO" id="GO:0050766">
    <property type="term" value="P:positive regulation of phagocytosis"/>
    <property type="evidence" value="ECO:0000315"/>
    <property type="project" value="UniProtKB"/>
</dbReference>
<dbReference type="GO" id="GO:1903428">
    <property type="term" value="P:positive regulation of reactive oxygen species biosynthetic process"/>
    <property type="evidence" value="ECO:0000315"/>
    <property type="project" value="UniProtKB"/>
</dbReference>
<dbReference type="GO" id="GO:1903307">
    <property type="term" value="P:positive regulation of regulated secretory pathway"/>
    <property type="evidence" value="ECO:0000315"/>
    <property type="project" value="UniProtKB"/>
</dbReference>
<dbReference type="GO" id="GO:0009306">
    <property type="term" value="P:protein secretion"/>
    <property type="evidence" value="ECO:0007669"/>
    <property type="project" value="Ensembl"/>
</dbReference>
<dbReference type="GO" id="GO:0048489">
    <property type="term" value="P:synaptic vesicle transport"/>
    <property type="evidence" value="ECO:0000304"/>
    <property type="project" value="ParkinsonsUK-UCL"/>
</dbReference>
<dbReference type="CDD" id="cd04127">
    <property type="entry name" value="Rab27A"/>
    <property type="match status" value="1"/>
</dbReference>
<dbReference type="FunFam" id="3.40.50.300:FF:000402">
    <property type="entry name" value="Ras-related protein Rab-27A"/>
    <property type="match status" value="1"/>
</dbReference>
<dbReference type="Gene3D" id="3.40.50.300">
    <property type="entry name" value="P-loop containing nucleotide triphosphate hydrolases"/>
    <property type="match status" value="1"/>
</dbReference>
<dbReference type="InterPro" id="IPR027417">
    <property type="entry name" value="P-loop_NTPase"/>
</dbReference>
<dbReference type="InterPro" id="IPR041837">
    <property type="entry name" value="Rab27a/b"/>
</dbReference>
<dbReference type="InterPro" id="IPR005225">
    <property type="entry name" value="Small_GTP-bd"/>
</dbReference>
<dbReference type="InterPro" id="IPR001806">
    <property type="entry name" value="Small_GTPase"/>
</dbReference>
<dbReference type="InterPro" id="IPR050305">
    <property type="entry name" value="Small_GTPase_Rab"/>
</dbReference>
<dbReference type="NCBIfam" id="TIGR00231">
    <property type="entry name" value="small_GTP"/>
    <property type="match status" value="1"/>
</dbReference>
<dbReference type="PANTHER" id="PTHR47980">
    <property type="entry name" value="LD44762P"/>
    <property type="match status" value="1"/>
</dbReference>
<dbReference type="Pfam" id="PF00071">
    <property type="entry name" value="Ras"/>
    <property type="match status" value="1"/>
</dbReference>
<dbReference type="PRINTS" id="PR00449">
    <property type="entry name" value="RASTRNSFRMNG"/>
</dbReference>
<dbReference type="SMART" id="SM00175">
    <property type="entry name" value="RAB"/>
    <property type="match status" value="1"/>
</dbReference>
<dbReference type="SMART" id="SM00176">
    <property type="entry name" value="RAN"/>
    <property type="match status" value="1"/>
</dbReference>
<dbReference type="SMART" id="SM00173">
    <property type="entry name" value="RAS"/>
    <property type="match status" value="1"/>
</dbReference>
<dbReference type="SMART" id="SM00174">
    <property type="entry name" value="RHO"/>
    <property type="match status" value="1"/>
</dbReference>
<dbReference type="SUPFAM" id="SSF52540">
    <property type="entry name" value="P-loop containing nucleoside triphosphate hydrolases"/>
    <property type="match status" value="1"/>
</dbReference>
<dbReference type="PROSITE" id="PS51419">
    <property type="entry name" value="RAB"/>
    <property type="match status" value="1"/>
</dbReference>
<comment type="function">
    <text evidence="11 13">Small GTPase which cycles between active GTP-bound and inactive GDP-bound states. In its active state, binds to a variety of effector proteins to regulate homeostasis of late endocytic pathway, including endosomal positioning, maturation and secretion (PubMed:30771381). Plays a role in cytotoxic granule exocytosis in lymphocytes. Required for both granule maturation and granule docking and priming at the immunologic synapse.</text>
</comment>
<comment type="catalytic activity">
    <reaction evidence="16 17">
        <text>GTP + H2O = GDP + phosphate + H(+)</text>
        <dbReference type="Rhea" id="RHEA:19669"/>
        <dbReference type="ChEBI" id="CHEBI:15377"/>
        <dbReference type="ChEBI" id="CHEBI:15378"/>
        <dbReference type="ChEBI" id="CHEBI:37565"/>
        <dbReference type="ChEBI" id="CHEBI:43474"/>
        <dbReference type="ChEBI" id="CHEBI:58189"/>
        <dbReference type="EC" id="3.6.5.2"/>
    </reaction>
    <physiologicalReaction direction="left-to-right" evidence="16 17">
        <dbReference type="Rhea" id="RHEA:19670"/>
    </physiologicalReaction>
</comment>
<comment type="activity regulation">
    <text evidence="18">Regulated by guanine nucleotide exchange factors (GEFs) which promote the exchange of bound GDP for free GTP, GTPase activating proteins (GAPs) which increase the GTP hydrolysis activity, and GDP dissociation inhibitors which inhibit the dissociation of the nucleotide from the GTPase. Activated by GEFs such as DENND10.</text>
</comment>
<comment type="subunit">
    <text evidence="2 4 8 10 11 12 13">Binds SYTL1, SLAC2B, MYRIP, SYTL3, SYTL4 and SYTL5. Interacts with RPH3A and RPH3A (By similarity). Binds MLPH and SYTL2. Interacts with UNC13D. Does not interact with the BLOC-3 complex (heterodimer of HPS1 and HPS4) (PubMed:20048159). Interacts (GDP-bound form preferentially) with DENND10 (PubMed:30771381).</text>
</comment>
<comment type="interaction">
    <interactant intactId="EBI-716881">
        <id>P51159</id>
    </interactant>
    <interactant intactId="EBI-7042162">
        <id>Q9BV36</id>
        <label>MLPH</label>
    </interactant>
    <organismsDiffer>false</organismsDiffer>
    <experiments>6</experiments>
</comment>
<comment type="interaction">
    <interactant intactId="EBI-716881">
        <id>P51159</id>
    </interactant>
    <interactant intactId="EBI-1759414">
        <id>Q8NFW9</id>
        <label>MYRIP</label>
    </interactant>
    <organismsDiffer>false</organismsDiffer>
    <experiments>3</experiments>
</comment>
<comment type="interaction">
    <interactant intactId="EBI-716881">
        <id>P51159</id>
    </interactant>
    <interactant intactId="EBI-2802861">
        <id>Q8IYJ3</id>
        <label>SYTL1</label>
    </interactant>
    <organismsDiffer>false</organismsDiffer>
    <experiments>5</experiments>
</comment>
<comment type="interaction">
    <interactant intactId="EBI-716881">
        <id>P51159</id>
    </interactant>
    <interactant intactId="EBI-2840607">
        <id>Q4VX76</id>
        <label>SYTL3</label>
    </interactant>
    <organismsDiffer>false</organismsDiffer>
    <experiments>5</experiments>
</comment>
<comment type="interaction">
    <interactant intactId="EBI-716881">
        <id>P51159</id>
    </interactant>
    <interactant intactId="EBI-747142">
        <id>Q96C24</id>
        <label>SYTL4</label>
    </interactant>
    <organismsDiffer>false</organismsDiffer>
    <experiments>5</experiments>
</comment>
<comment type="interaction">
    <interactant intactId="EBI-716881">
        <id>P51159</id>
    </interactant>
    <interactant intactId="EBI-12243980">
        <id>Q8TDW5-2</id>
        <label>SYTL5</label>
    </interactant>
    <organismsDiffer>false</organismsDiffer>
    <experiments>3</experiments>
</comment>
<comment type="interaction">
    <interactant intactId="EBI-716881">
        <id>P51159</id>
    </interactant>
    <interactant intactId="EBI-11479429">
        <id>Q70J99</id>
        <label>UNC13D</label>
    </interactant>
    <organismsDiffer>false</organismsDiffer>
    <experiments>3</experiments>
</comment>
<comment type="interaction">
    <interactant intactId="EBI-15528760">
        <id>P51159-1</id>
    </interactant>
    <interactant intactId="EBI-7042162">
        <id>Q9BV36</id>
        <label>MLPH</label>
    </interactant>
    <organismsDiffer>false</organismsDiffer>
    <experiments>2</experiments>
</comment>
<comment type="subcellular location">
    <subcellularLocation>
        <location evidence="15">Membrane</location>
        <topology evidence="15">Lipid-anchor</topology>
    </subcellularLocation>
    <subcellularLocation>
        <location evidence="7 9">Melanosome</location>
    </subcellularLocation>
    <subcellularLocation>
        <location evidence="8 13">Late endosome</location>
    </subcellularLocation>
    <subcellularLocation>
        <location evidence="8">Lysosome</location>
    </subcellularLocation>
    <text evidence="7 9 10">Identified by mass spectrometry in melanosome fractions from stage I to stage IV (PubMed:12643545, PubMed:17081065). Localizes to endosomal exocytic vesicles (PubMed:17237785).</text>
</comment>
<comment type="alternative products">
    <event type="alternative splicing"/>
    <isoform>
        <id>P51159-1</id>
        <name>Long</name>
        <sequence type="displayed"/>
    </isoform>
    <isoform>
        <id>P51159-2</id>
        <name>Short</name>
        <sequence type="described" ref="VSP_005529"/>
    </isoform>
</comment>
<comment type="tissue specificity">
    <text evidence="8">Found in all the examined tissues except in brain. Low expression was found in thymus, kidney, muscle and placenta. Detected in melanocytes, and in most tumor cell lines examined. Expressed in cytotoxic T-lymphocytes (CTL) and mast cells.</text>
</comment>
<comment type="disease" evidence="3 5 6 8">
    <disease id="DI-01687">
        <name>Griscelli syndrome 2</name>
        <acronym>GS2</acronym>
        <description>Rare autosomal recessive disorder that results in pigmentary dilution of the skin and hair, the presence of large clumps of pigment in hair shafts, and an accumulation of melanosomes in melanocytes. GS2 patients also develop an uncontrolled T-lymphocyte and macrophage activation syndrome, known as hemophagocytic syndrome, leading to death in the absence of bone marrow transplantation. Neurological impairment is present in some patients, likely as a result of hemophagocytic syndrome.</description>
        <dbReference type="MIM" id="607624"/>
    </disease>
    <text>The disease is caused by variants affecting the gene represented in this entry.</text>
</comment>
<comment type="similarity">
    <text evidence="15">Belongs to the small GTPase superfamily. Rab family.</text>
</comment>
<comment type="online information" name="RAB27Abase">
    <link uri="https://databases.lovd.nl/shared/genes/RAB27A"/>
    <text>RAB27A mutation db</text>
</comment>
<sequence length="221" mass="24868">MSDGDYDYLIKFLALGDSGVGKTSVLYQYTDGKFNSKFITTVGIDFREKRVVYRASGPDGATGRGQRIHLQLWDTAGQERFRSLTTAFFRDAMGFLLLFDLTNEQSFLNVRNWISQLQMHAYCENPDIVLCGNKSDLEDQRVVKEEEAIALAEKYGIPYFETSAANGTNISQAIEMLLDLIMKRMERCVDKSWIPEGVVRSNGHASTDQLSEEKEKGACGC</sequence>
<gene>
    <name type="primary">RAB27A</name>
    <name type="synonym">RAB27</name>
</gene>
<accession>P51159</accession>
<accession>O00195</accession>
<accession>Q6FI40</accession>
<accession>Q9UIR9</accession>
<accession>Q9Y5U3</accession>
<feature type="initiator methionine" description="Removed" evidence="19 21">
    <location>
        <position position="1"/>
    </location>
</feature>
<feature type="chain" id="PRO_0000121221" description="Ras-related protein Rab-27A">
    <location>
        <begin position="2"/>
        <end position="221"/>
    </location>
</feature>
<feature type="short sequence motif" description="Effector region" evidence="1">
    <location>
        <begin position="38"/>
        <end position="46"/>
    </location>
</feature>
<feature type="binding site" evidence="1">
    <location>
        <begin position="16"/>
        <end position="24"/>
    </location>
    <ligand>
        <name>GTP</name>
        <dbReference type="ChEBI" id="CHEBI:37565"/>
    </ligand>
</feature>
<feature type="binding site" evidence="1">
    <location>
        <begin position="74"/>
        <end position="78"/>
    </location>
    <ligand>
        <name>GTP</name>
        <dbReference type="ChEBI" id="CHEBI:37565"/>
    </ligand>
</feature>
<feature type="binding site" evidence="1">
    <location>
        <begin position="133"/>
        <end position="136"/>
    </location>
    <ligand>
        <name>GTP</name>
        <dbReference type="ChEBI" id="CHEBI:37565"/>
    </ligand>
</feature>
<feature type="binding site" evidence="1">
    <location>
        <begin position="163"/>
        <end position="165"/>
    </location>
    <ligand>
        <name>GTP</name>
        <dbReference type="ChEBI" id="CHEBI:37565"/>
    </ligand>
</feature>
<feature type="modified residue" description="N-acetylserine" evidence="19 21">
    <location>
        <position position="2"/>
    </location>
</feature>
<feature type="modified residue" description="Phosphoserine" evidence="20">
    <location>
        <position position="2"/>
    </location>
</feature>
<feature type="modified residue" description="Cysteine methyl ester" evidence="1">
    <location>
        <position position="221"/>
    </location>
</feature>
<feature type="lipid moiety-binding region" description="S-geranylgeranyl cysteine" evidence="1">
    <location>
        <position position="219"/>
    </location>
</feature>
<feature type="lipid moiety-binding region" description="S-geranylgeranyl cysteine" evidence="1">
    <location>
        <position position="221"/>
    </location>
</feature>
<feature type="disulfide bond" evidence="1">
    <location>
        <begin position="123"/>
        <end position="188"/>
    </location>
</feature>
<feature type="splice variant" id="VSP_005529" description="In isoform Short." evidence="14">
    <location>
        <begin position="146"/>
        <end position="153"/>
    </location>
</feature>
<feature type="sequence variant" id="VAR_028206" description="In dbSNP:rs1050930.">
    <original>T</original>
    <variation>S</variation>
    <location>
        <position position="62"/>
    </location>
</feature>
<feature type="sequence variant" id="VAR_010654" description="In GS2; does not affect GTP binding; cannot interact with MLPH; significant reduction in interaction with UNC13D; abolishes localization to lysosomes; dbSNP:rs28938176." evidence="3 5 6 8">
    <original>W</original>
    <variation>G</variation>
    <location>
        <position position="73"/>
    </location>
</feature>
<feature type="sequence variant" id="VAR_028207" description="In dbSNP:rs4340274.">
    <original>L</original>
    <variation>F</variation>
    <location>
        <position position="84"/>
    </location>
</feature>
<feature type="sequence variant" id="VAR_028208" description="In dbSNP:rs719705.">
    <original>T</original>
    <variation>P</variation>
    <location>
        <position position="85"/>
    </location>
</feature>
<feature type="sequence variant" id="VAR_011334" description="In GS2; strongly affects GTP binding; cannot interact with MLPH; dbSNP:rs104894498." evidence="3 5 6">
    <original>L</original>
    <variation>P</variation>
    <location>
        <position position="130"/>
    </location>
</feature>
<feature type="sequence variant" id="VAR_011335" description="In GS2; interferes with melanosome transport; dbSNP:rs104894499." evidence="3 5 6">
    <original>A</original>
    <variation>P</variation>
    <location>
        <position position="152"/>
    </location>
</feature>
<feature type="mutagenesis site" description="GDP-locked. Abolishes interaction with UNC13D and localization to lysosomes. Increases interaction with DENND10. Disrupts late endocytic pathway homeostasis." evidence="8 13">
    <original>T</original>
    <variation>N</variation>
    <location>
        <position position="23"/>
    </location>
</feature>
<feature type="mutagenesis site" description="Abolishes interaction with SYTL2." evidence="11">
    <original>L</original>
    <variation>P</variation>
    <location>
        <position position="70"/>
    </location>
</feature>
<feature type="mutagenesis site" description="Abolishes interaction with SYTL2." evidence="11">
    <original>A</original>
    <variation>V</variation>
    <location>
        <position position="76"/>
    </location>
</feature>
<feature type="mutagenesis site" description="GTP-locked. decreases interaction with DENND10." evidence="13">
    <original>Q</original>
    <variation>L</variation>
    <location>
        <position position="78"/>
    </location>
</feature>
<feature type="sequence conflict" description="In Ref. 3; AAC51195 and 5; AAD43049." evidence="15" ref="3 5">
    <original>E</original>
    <variation>P</variation>
    <location>
        <position position="48"/>
    </location>
</feature>
<feature type="sequence conflict" description="In Ref. 3; AAC51195 and 5; AAD43049." evidence="15" ref="3 5">
    <original>AT</original>
    <variation>PV</variation>
    <location>
        <begin position="61"/>
        <end position="62"/>
    </location>
</feature>
<feature type="strand" evidence="23">
    <location>
        <begin position="7"/>
        <end position="17"/>
    </location>
</feature>
<feature type="helix" evidence="23">
    <location>
        <begin position="22"/>
        <end position="31"/>
    </location>
</feature>
<feature type="strand" evidence="23">
    <location>
        <begin position="43"/>
        <end position="54"/>
    </location>
</feature>
<feature type="helix" evidence="22">
    <location>
        <begin position="58"/>
        <end position="60"/>
    </location>
</feature>
<feature type="strand" evidence="23">
    <location>
        <begin position="65"/>
        <end position="75"/>
    </location>
</feature>
<feature type="helix" evidence="23">
    <location>
        <begin position="79"/>
        <end position="81"/>
    </location>
</feature>
<feature type="helix" evidence="23">
    <location>
        <begin position="82"/>
        <end position="86"/>
    </location>
</feature>
<feature type="helix" evidence="23">
    <location>
        <begin position="87"/>
        <end position="90"/>
    </location>
</feature>
<feature type="strand" evidence="23">
    <location>
        <begin position="95"/>
        <end position="100"/>
    </location>
</feature>
<feature type="helix" evidence="23">
    <location>
        <begin position="104"/>
        <end position="108"/>
    </location>
</feature>
<feature type="helix" evidence="23">
    <location>
        <begin position="110"/>
        <end position="120"/>
    </location>
</feature>
<feature type="strand" evidence="23">
    <location>
        <begin position="122"/>
        <end position="125"/>
    </location>
</feature>
<feature type="strand" evidence="23">
    <location>
        <begin position="128"/>
        <end position="133"/>
    </location>
</feature>
<feature type="helix" evidence="23">
    <location>
        <begin position="138"/>
        <end position="140"/>
    </location>
</feature>
<feature type="helix" evidence="23">
    <location>
        <begin position="145"/>
        <end position="155"/>
    </location>
</feature>
<feature type="strand" evidence="23">
    <location>
        <begin position="159"/>
        <end position="161"/>
    </location>
</feature>
<feature type="turn" evidence="23">
    <location>
        <begin position="164"/>
        <end position="166"/>
    </location>
</feature>
<feature type="helix" evidence="23">
    <location>
        <begin position="170"/>
        <end position="187"/>
    </location>
</feature>
<keyword id="KW-0002">3D-structure</keyword>
<keyword id="KW-0007">Acetylation</keyword>
<keyword id="KW-0025">Alternative splicing</keyword>
<keyword id="KW-0903">Direct protein sequencing</keyword>
<keyword id="KW-0225">Disease variant</keyword>
<keyword id="KW-1015">Disulfide bond</keyword>
<keyword id="KW-0967">Endosome</keyword>
<keyword id="KW-0268">Exocytosis</keyword>
<keyword id="KW-0342">GTP-binding</keyword>
<keyword id="KW-0378">Hydrolase</keyword>
<keyword id="KW-0449">Lipoprotein</keyword>
<keyword id="KW-0458">Lysosome</keyword>
<keyword id="KW-0472">Membrane</keyword>
<keyword id="KW-0488">Methylation</keyword>
<keyword id="KW-0547">Nucleotide-binding</keyword>
<keyword id="KW-0597">Phosphoprotein</keyword>
<keyword id="KW-0636">Prenylation</keyword>
<keyword id="KW-1267">Proteomics identification</keyword>
<keyword id="KW-1185">Reference proteome</keyword>
<organism>
    <name type="scientific">Homo sapiens</name>
    <name type="common">Human</name>
    <dbReference type="NCBI Taxonomy" id="9606"/>
    <lineage>
        <taxon>Eukaryota</taxon>
        <taxon>Metazoa</taxon>
        <taxon>Chordata</taxon>
        <taxon>Craniata</taxon>
        <taxon>Vertebrata</taxon>
        <taxon>Euteleostomi</taxon>
        <taxon>Mammalia</taxon>
        <taxon>Eutheria</taxon>
        <taxon>Euarchontoglires</taxon>
        <taxon>Primates</taxon>
        <taxon>Haplorrhini</taxon>
        <taxon>Catarrhini</taxon>
        <taxon>Hominidae</taxon>
        <taxon>Homo</taxon>
    </lineage>
</organism>
<protein>
    <recommendedName>
        <fullName>Ras-related protein Rab-27A</fullName>
        <shortName>Rab-27</shortName>
        <ecNumber evidence="16 17">3.6.5.2</ecNumber>
    </recommendedName>
    <alternativeName>
        <fullName>GTP-binding protein Ram</fullName>
    </alternativeName>
</protein>